<proteinExistence type="evidence at transcript level"/>
<protein>
    <recommendedName>
        <fullName>Peroxiredoxin-like 2A</fullName>
    </recommendedName>
    <alternativeName>
        <fullName>Peroxiredoxin-like 2 activated in M-CSF stimulated monocytes</fullName>
        <shortName>Protein PAMM</shortName>
    </alternativeName>
    <alternativeName>
        <fullName>Redox-regulatory protein FAM213A</fullName>
    </alternativeName>
</protein>
<accession>Q5ZI34</accession>
<gene>
    <name type="primary">PRXL2A</name>
    <name type="synonym">FAM213A</name>
    <name type="synonym">PAMM</name>
    <name type="ORF">RCJMB04_30m16</name>
</gene>
<feature type="chain" id="PRO_0000398782" description="Peroxiredoxin-like 2A">
    <location>
        <begin position="1"/>
        <end position="224"/>
    </location>
</feature>
<feature type="region of interest" description="Thioredoxin fold" evidence="1">
    <location>
        <begin position="14"/>
        <end position="112"/>
    </location>
</feature>
<feature type="active site" description="Redox-active" evidence="1">
    <location>
        <position position="88"/>
    </location>
</feature>
<feature type="non-standard amino acid" description="Selenocysteine" evidence="2">
    <location>
        <position position="85"/>
    </location>
</feature>
<name>PXL2A_CHICK</name>
<evidence type="ECO:0000250" key="1"/>
<evidence type="ECO:0000269" key="2">
    <source>
    </source>
</evidence>
<evidence type="ECO:0000305" key="3"/>
<keyword id="KW-0049">Antioxidant</keyword>
<keyword id="KW-0963">Cytoplasm</keyword>
<keyword id="KW-0676">Redox-active center</keyword>
<keyword id="KW-1185">Reference proteome</keyword>
<keyword id="KW-0712">Selenocysteine</keyword>
<organism>
    <name type="scientific">Gallus gallus</name>
    <name type="common">Chicken</name>
    <dbReference type="NCBI Taxonomy" id="9031"/>
    <lineage>
        <taxon>Eukaryota</taxon>
        <taxon>Metazoa</taxon>
        <taxon>Chordata</taxon>
        <taxon>Craniata</taxon>
        <taxon>Vertebrata</taxon>
        <taxon>Euteleostomi</taxon>
        <taxon>Archelosauria</taxon>
        <taxon>Archosauria</taxon>
        <taxon>Dinosauria</taxon>
        <taxon>Saurischia</taxon>
        <taxon>Theropoda</taxon>
        <taxon>Coelurosauria</taxon>
        <taxon>Aves</taxon>
        <taxon>Neognathae</taxon>
        <taxon>Galloanserae</taxon>
        <taxon>Galliformes</taxon>
        <taxon>Phasianidae</taxon>
        <taxon>Phasianinae</taxon>
        <taxon>Gallus</taxon>
    </lineage>
</organism>
<sequence length="224" mass="24948">MSFLPDFGIFTMGMWSVGLGAVGAAITGIVLANTDLFLSKPEKATLEFLEAIELKTLGSEPRTFKASELWKKNGAVIMAVRRPGUFLCREEASELSSLKPQLSKLGVPLYAVVKEKIGTEVEDFQHYFQGEIFLDEKRSFYGPRKRKMMLSGFFRIGVWQNFFRAWKNGYSGNLEGEGFTLGGVYVIGAGRQGILLEHREKEFGDKVSLPSVLEAAEKIKPQAS</sequence>
<comment type="function">
    <text evidence="1">Involved in redox regulation of the cell. Acts as an antioxidant. Inhibits TNFSF11-induced NFKB1 and JUN activation and osteoclast differentiation. May affect bone resorption and help to maintain bone mass (By similarity).</text>
</comment>
<comment type="subcellular location">
    <subcellularLocation>
        <location evidence="1">Cytoplasm</location>
    </subcellularLocation>
</comment>
<comment type="miscellaneous">
    <text>The active site Cys-88 corresponds to one of the redox-active cysteines of peroxiredoxins.</text>
</comment>
<comment type="similarity">
    <text evidence="3">Belongs to the peroxiredoxin-like PRXL2 family. PRXL2A subfamily.</text>
</comment>
<comment type="sequence caution" evidence="3">
    <conflict type="erroneous termination">
        <sequence resource="EMBL-CDS" id="CAG32609"/>
    </conflict>
    <text>Truncated C-terminus.</text>
</comment>
<dbReference type="EMBL" id="AJ720950">
    <property type="protein sequence ID" value="CAG32609.1"/>
    <property type="status" value="ALT_SEQ"/>
    <property type="molecule type" value="mRNA"/>
</dbReference>
<dbReference type="RefSeq" id="NP_001180448.1">
    <property type="nucleotide sequence ID" value="NM_001193519.2"/>
</dbReference>
<dbReference type="FunCoup" id="Q5ZI34">
    <property type="interactions" value="1305"/>
</dbReference>
<dbReference type="STRING" id="9031.ENSGALP00000057134"/>
<dbReference type="PaxDb" id="9031-ENSGALP00000003802"/>
<dbReference type="GeneID" id="423625"/>
<dbReference type="KEGG" id="gga:423625"/>
<dbReference type="CTD" id="84293"/>
<dbReference type="VEuPathDB" id="HostDB:geneid_423625"/>
<dbReference type="eggNOG" id="KOG4498">
    <property type="taxonomic scope" value="Eukaryota"/>
</dbReference>
<dbReference type="InParanoid" id="Q5ZI34"/>
<dbReference type="OrthoDB" id="40334at2759"/>
<dbReference type="PhylomeDB" id="Q5ZI34"/>
<dbReference type="PRO" id="PR:Q5ZI34"/>
<dbReference type="Proteomes" id="UP000000539">
    <property type="component" value="Unassembled WGS sequence"/>
</dbReference>
<dbReference type="GO" id="GO:0005737">
    <property type="term" value="C:cytoplasm"/>
    <property type="evidence" value="ECO:0000318"/>
    <property type="project" value="GO_Central"/>
</dbReference>
<dbReference type="GO" id="GO:0016209">
    <property type="term" value="F:antioxidant activity"/>
    <property type="evidence" value="ECO:0000318"/>
    <property type="project" value="GO_Central"/>
</dbReference>
<dbReference type="CDD" id="cd02970">
    <property type="entry name" value="PRX_like2"/>
    <property type="match status" value="1"/>
</dbReference>
<dbReference type="FunFam" id="3.40.30.10:FF:000312">
    <property type="entry name" value="redox-regulatory protein FAM213A isoform X1"/>
    <property type="match status" value="1"/>
</dbReference>
<dbReference type="Gene3D" id="3.40.30.10">
    <property type="entry name" value="Glutaredoxin"/>
    <property type="match status" value="1"/>
</dbReference>
<dbReference type="InterPro" id="IPR032801">
    <property type="entry name" value="PXL2A/B/C"/>
</dbReference>
<dbReference type="InterPro" id="IPR036249">
    <property type="entry name" value="Thioredoxin-like_sf"/>
</dbReference>
<dbReference type="PANTHER" id="PTHR28630">
    <property type="match status" value="1"/>
</dbReference>
<dbReference type="PANTHER" id="PTHR28630:SF31">
    <property type="entry name" value="PEROXIREDOXIN-LIKE 2A"/>
    <property type="match status" value="1"/>
</dbReference>
<dbReference type="Pfam" id="PF13911">
    <property type="entry name" value="AhpC-TSA_2"/>
    <property type="match status" value="1"/>
</dbReference>
<dbReference type="SUPFAM" id="SSF52833">
    <property type="entry name" value="Thioredoxin-like"/>
    <property type="match status" value="1"/>
</dbReference>
<reference key="1">
    <citation type="journal article" date="2005" name="Genome Biol.">
        <title>Full-length cDNAs from chicken bursal lymphocytes to facilitate gene function analysis.</title>
        <authorList>
            <person name="Caldwell R.B."/>
            <person name="Kierzek A.M."/>
            <person name="Arakawa H."/>
            <person name="Bezzubov Y."/>
            <person name="Zaim J."/>
            <person name="Fiedler P."/>
            <person name="Kutter S."/>
            <person name="Blagodatski A."/>
            <person name="Kostovska D."/>
            <person name="Koter M."/>
            <person name="Plachy J."/>
            <person name="Carninci P."/>
            <person name="Hayashizaki Y."/>
            <person name="Buerstedde J.-M."/>
        </authorList>
    </citation>
    <scope>NUCLEOTIDE SEQUENCE [LARGE SCALE MRNA]</scope>
    <source>
        <strain>CB</strain>
        <tissue>Bursa of Fabricius</tissue>
    </source>
</reference>
<reference key="2">
    <citation type="journal article" date="2004" name="EMBO Rep.">
        <title>Reconsidering the evolution of eukaryotic selenoproteins: a novel nonmammalian family with scattered phylogenetic distribution.</title>
        <authorList>
            <person name="Castellano S."/>
            <person name="Novoselov S.V."/>
            <person name="Kryukov G.V."/>
            <person name="Lescure A."/>
            <person name="Blanco E."/>
            <person name="Krol A."/>
            <person name="Gladyshev V.N."/>
            <person name="Guigo R."/>
        </authorList>
    </citation>
    <scope>SELENOCYSTEINE AT SEC-85</scope>
</reference>